<proteinExistence type="evidence at protein level"/>
<reference key="1">
    <citation type="journal article" date="2005" name="Am. J. Physiol.">
        <title>Expression and functional properties of four slow skeletal troponin T isoforms in rat muscles.</title>
        <authorList>
            <person name="Kischel P."/>
            <person name="Bastide B."/>
            <person name="Muller M."/>
            <person name="Dubail F."/>
            <person name="Offredi F."/>
            <person name="Jin J.-P."/>
            <person name="Mounier Y."/>
            <person name="Martial J."/>
        </authorList>
    </citation>
    <scope>NUCLEOTIDE SEQUENCE [MRNA] (ISOFORMS 1; 2; 3 AND 4)</scope>
    <scope>TISSUE SPECIFICITY</scope>
    <source>
        <strain>Wistar</strain>
    </source>
</reference>
<reference key="2">
    <citation type="submission" date="2001-07" db="EMBL/GenBank/DDBJ databases">
        <authorList>
            <person name="Chang Y.Y."/>
            <person name="Zuo J.J."/>
            <person name="Fang F.F."/>
        </authorList>
    </citation>
    <scope>NUCLEOTIDE SEQUENCE [MRNA] (ISOFORM 1)</scope>
    <source>
        <strain>Sprague-Dawley</strain>
    </source>
</reference>
<reference key="3">
    <citation type="journal article" date="2012" name="Nat. Commun.">
        <title>Quantitative maps of protein phosphorylation sites across 14 different rat organs and tissues.</title>
        <authorList>
            <person name="Lundby A."/>
            <person name="Secher A."/>
            <person name="Lage K."/>
            <person name="Nordsborg N.B."/>
            <person name="Dmytriyev A."/>
            <person name="Lundby C."/>
            <person name="Olsen J.V."/>
        </authorList>
    </citation>
    <scope>IDENTIFICATION BY MASS SPECTROMETRY [LARGE SCALE ANALYSIS]</scope>
</reference>
<organism>
    <name type="scientific">Rattus norvegicus</name>
    <name type="common">Rat</name>
    <dbReference type="NCBI Taxonomy" id="10116"/>
    <lineage>
        <taxon>Eukaryota</taxon>
        <taxon>Metazoa</taxon>
        <taxon>Chordata</taxon>
        <taxon>Craniata</taxon>
        <taxon>Vertebrata</taxon>
        <taxon>Euteleostomi</taxon>
        <taxon>Mammalia</taxon>
        <taxon>Eutheria</taxon>
        <taxon>Euarchontoglires</taxon>
        <taxon>Glires</taxon>
        <taxon>Rodentia</taxon>
        <taxon>Myomorpha</taxon>
        <taxon>Muroidea</taxon>
        <taxon>Muridae</taxon>
        <taxon>Murinae</taxon>
        <taxon>Rattus</taxon>
    </lineage>
</organism>
<keyword id="KW-0025">Alternative splicing</keyword>
<keyword id="KW-0514">Muscle protein</keyword>
<keyword id="KW-0597">Phosphoprotein</keyword>
<keyword id="KW-1185">Reference proteome</keyword>
<evidence type="ECO:0000250" key="1"/>
<evidence type="ECO:0000250" key="2">
    <source>
        <dbReference type="UniProtKB" id="P13805"/>
    </source>
</evidence>
<evidence type="ECO:0000256" key="3">
    <source>
        <dbReference type="SAM" id="MobiDB-lite"/>
    </source>
</evidence>
<evidence type="ECO:0000269" key="4">
    <source>
    </source>
</evidence>
<evidence type="ECO:0000303" key="5">
    <source>
    </source>
</evidence>
<evidence type="ECO:0000305" key="6"/>
<dbReference type="EMBL" id="AY334079">
    <property type="protein sequence ID" value="AAQ19259.1"/>
    <property type="molecule type" value="mRNA"/>
</dbReference>
<dbReference type="EMBL" id="AY334080">
    <property type="protein sequence ID" value="AAQ19260.1"/>
    <property type="molecule type" value="mRNA"/>
</dbReference>
<dbReference type="EMBL" id="AY334081">
    <property type="protein sequence ID" value="AAQ19261.1"/>
    <property type="molecule type" value="mRNA"/>
</dbReference>
<dbReference type="EMBL" id="AY334082">
    <property type="protein sequence ID" value="AAQ19262.1"/>
    <property type="molecule type" value="mRNA"/>
</dbReference>
<dbReference type="EMBL" id="AF399874">
    <property type="protein sequence ID" value="AAK94010.1"/>
    <property type="status" value="ALT_SEQ"/>
    <property type="molecule type" value="mRNA"/>
</dbReference>
<dbReference type="RefSeq" id="NP_001264189.1">
    <molecule id="Q7TNB2-2"/>
    <property type="nucleotide sequence ID" value="NM_001277260.1"/>
</dbReference>
<dbReference type="RefSeq" id="NP_001264190.1">
    <molecule id="Q7TNB2-3"/>
    <property type="nucleotide sequence ID" value="NM_001277261.2"/>
</dbReference>
<dbReference type="RefSeq" id="NP_001264191.1">
    <molecule id="Q7TNB2-4"/>
    <property type="nucleotide sequence ID" value="NM_001277262.2"/>
</dbReference>
<dbReference type="RefSeq" id="NP_599215.2">
    <molecule id="Q7TNB2-1"/>
    <property type="nucleotide sequence ID" value="NM_134388.2"/>
</dbReference>
<dbReference type="SMR" id="Q7TNB2"/>
<dbReference type="FunCoup" id="Q7TNB2">
    <property type="interactions" value="129"/>
</dbReference>
<dbReference type="STRING" id="10116.ENSRNOP00000038327"/>
<dbReference type="iPTMnet" id="Q7TNB2"/>
<dbReference type="PhosphoSitePlus" id="Q7TNB2"/>
<dbReference type="jPOST" id="Q7TNB2"/>
<dbReference type="PaxDb" id="10116-ENSRNOP00000038327"/>
<dbReference type="Ensembl" id="ENSRNOT00000034957.7">
    <molecule id="Q7TNB2-1"/>
    <property type="protein sequence ID" value="ENSRNOP00000038327.4"/>
    <property type="gene ID" value="ENSRNOG00000028041.8"/>
</dbReference>
<dbReference type="Ensembl" id="ENSRNOT00000058843.6">
    <molecule id="Q7TNB2-4"/>
    <property type="protein sequence ID" value="ENSRNOP00000055633.4"/>
    <property type="gene ID" value="ENSRNOG00000028041.8"/>
</dbReference>
<dbReference type="GeneID" id="171409"/>
<dbReference type="KEGG" id="rno:171409"/>
<dbReference type="UCSC" id="RGD:621852">
    <molecule id="Q7TNB2-1"/>
    <property type="organism name" value="rat"/>
</dbReference>
<dbReference type="AGR" id="RGD:621852"/>
<dbReference type="CTD" id="7138"/>
<dbReference type="RGD" id="621852">
    <property type="gene designation" value="Tnnt1"/>
</dbReference>
<dbReference type="eggNOG" id="KOG3634">
    <property type="taxonomic scope" value="Eukaryota"/>
</dbReference>
<dbReference type="GeneTree" id="ENSGT00940000160609"/>
<dbReference type="InParanoid" id="Q7TNB2"/>
<dbReference type="OMA" id="EWIYELE"/>
<dbReference type="OrthoDB" id="330499at2759"/>
<dbReference type="PhylomeDB" id="Q7TNB2"/>
<dbReference type="Reactome" id="R-RNO-390522">
    <property type="pathway name" value="Striated Muscle Contraction"/>
</dbReference>
<dbReference type="PRO" id="PR:Q7TNB2"/>
<dbReference type="Proteomes" id="UP000002494">
    <property type="component" value="Chromosome 1"/>
</dbReference>
<dbReference type="Bgee" id="ENSRNOG00000028041">
    <property type="expression patterns" value="Expressed in esophagus and 17 other cell types or tissues"/>
</dbReference>
<dbReference type="GO" id="GO:0005861">
    <property type="term" value="C:troponin complex"/>
    <property type="evidence" value="ECO:0000314"/>
    <property type="project" value="RGD"/>
</dbReference>
<dbReference type="GO" id="GO:0005523">
    <property type="term" value="F:tropomyosin binding"/>
    <property type="evidence" value="ECO:0000266"/>
    <property type="project" value="RGD"/>
</dbReference>
<dbReference type="GO" id="GO:0031014">
    <property type="term" value="F:troponin T binding"/>
    <property type="evidence" value="ECO:0000314"/>
    <property type="project" value="RGD"/>
</dbReference>
<dbReference type="GO" id="GO:0045932">
    <property type="term" value="P:negative regulation of muscle contraction"/>
    <property type="evidence" value="ECO:0000266"/>
    <property type="project" value="RGD"/>
</dbReference>
<dbReference type="GO" id="GO:0003009">
    <property type="term" value="P:skeletal muscle contraction"/>
    <property type="evidence" value="ECO:0000266"/>
    <property type="project" value="RGD"/>
</dbReference>
<dbReference type="GO" id="GO:0031444">
    <property type="term" value="P:slow-twitch skeletal muscle fiber contraction"/>
    <property type="evidence" value="ECO:0000314"/>
    <property type="project" value="RGD"/>
</dbReference>
<dbReference type="GO" id="GO:0014883">
    <property type="term" value="P:transition between fast and slow fiber"/>
    <property type="evidence" value="ECO:0000266"/>
    <property type="project" value="RGD"/>
</dbReference>
<dbReference type="FunFam" id="1.20.5.350:FF:000001">
    <property type="entry name" value="Troponin T, fast skeletal muscle"/>
    <property type="match status" value="1"/>
</dbReference>
<dbReference type="Gene3D" id="1.20.5.350">
    <property type="match status" value="1"/>
</dbReference>
<dbReference type="InterPro" id="IPR027707">
    <property type="entry name" value="TNNT"/>
</dbReference>
<dbReference type="InterPro" id="IPR001978">
    <property type="entry name" value="Troponin"/>
</dbReference>
<dbReference type="InterPro" id="IPR038077">
    <property type="entry name" value="Troponin_sf"/>
</dbReference>
<dbReference type="PANTHER" id="PTHR11521">
    <property type="entry name" value="TROPONIN T"/>
    <property type="match status" value="1"/>
</dbReference>
<dbReference type="PANTHER" id="PTHR11521:SF6">
    <property type="entry name" value="TROPONIN T, SLOW SKELETAL MUSCLE"/>
    <property type="match status" value="1"/>
</dbReference>
<dbReference type="Pfam" id="PF00992">
    <property type="entry name" value="Troponin"/>
    <property type="match status" value="2"/>
</dbReference>
<dbReference type="SUPFAM" id="SSF90250">
    <property type="entry name" value="Troponin coil-coiled subunits"/>
    <property type="match status" value="1"/>
</dbReference>
<comment type="function">
    <text>Troponin T is the tropomyosin-binding subunit of troponin, the thin filament regulatory complex which confers calcium-sensitivity to striated muscle actomyosin ATPase activity.</text>
</comment>
<comment type="subunit">
    <text evidence="2">Interacts with TPM3.</text>
</comment>
<comment type="alternative products">
    <event type="alternative splicing"/>
    <isoform>
        <id>Q7TNB2-1</id>
        <name>1</name>
        <name>sTnT1</name>
        <sequence type="displayed"/>
    </isoform>
    <isoform>
        <id>Q7TNB2-2</id>
        <name>2</name>
        <name>sTnT2</name>
        <sequence type="described" ref="VSP_013790"/>
    </isoform>
    <isoform>
        <id>Q7TNB2-3</id>
        <name>3</name>
        <name>sTnT3</name>
        <sequence type="described" ref="VSP_013789 VSP_013790"/>
    </isoform>
    <isoform>
        <id>Q7TNB2-4</id>
        <name>4</name>
        <name>sTnTx</name>
        <sequence type="described" ref="VSP_013789"/>
    </isoform>
</comment>
<comment type="tissue specificity">
    <text evidence="4">Expressed in soleus muscle. Isoform 4 is predominantly expressed in fast muscles.</text>
</comment>
<comment type="miscellaneous">
    <molecule>Isoform 1</molecule>
    <text>Major.</text>
</comment>
<comment type="miscellaneous">
    <molecule>Isoform 2</molecule>
    <text evidence="6">Major.</text>
</comment>
<comment type="miscellaneous">
    <molecule>Isoform 3</molecule>
    <text evidence="6">Minor.</text>
</comment>
<comment type="miscellaneous">
    <molecule>Isoform 4</molecule>
    <text evidence="6">Minor.</text>
</comment>
<comment type="similarity">
    <text evidence="6">Belongs to the troponin T family.</text>
</comment>
<comment type="sequence caution" evidence="6">
    <conflict type="erroneous termination">
        <sequence resource="EMBL-CDS" id="AAK94010"/>
    </conflict>
    <text>Truncated C-terminus.</text>
</comment>
<feature type="chain" id="PRO_0000186171" description="Troponin T, slow skeletal muscle">
    <location>
        <begin position="1"/>
        <end position="261"/>
    </location>
</feature>
<feature type="region of interest" description="Disordered" evidence="3">
    <location>
        <begin position="1"/>
        <end position="61"/>
    </location>
</feature>
<feature type="region of interest" description="Disordered" evidence="3">
    <location>
        <begin position="108"/>
        <end position="152"/>
    </location>
</feature>
<feature type="compositionally biased region" description="Acidic residues" evidence="3">
    <location>
        <begin position="1"/>
        <end position="30"/>
    </location>
</feature>
<feature type="compositionally biased region" description="Basic and acidic residues" evidence="3">
    <location>
        <begin position="31"/>
        <end position="40"/>
    </location>
</feature>
<feature type="compositionally biased region" description="Pro residues" evidence="3">
    <location>
        <begin position="42"/>
        <end position="54"/>
    </location>
</feature>
<feature type="compositionally biased region" description="Basic and acidic residues" evidence="3">
    <location>
        <begin position="108"/>
        <end position="148"/>
    </location>
</feature>
<feature type="modified residue" description="Phosphoserine; by CK2" evidence="1">
    <location>
        <position position="2"/>
    </location>
</feature>
<feature type="splice variant" id="VSP_013789" description="In isoform 3 and isoform 4." evidence="5">
    <location>
        <begin position="24"/>
        <end position="34"/>
    </location>
</feature>
<feature type="splice variant" id="VSP_013790" description="In isoform 2 and isoform 3." evidence="5">
    <location>
        <position position="35"/>
    </location>
</feature>
<gene>
    <name type="primary">Tnnt1</name>
    <name type="synonym">Fang2</name>
</gene>
<accession>Q7TNB2</accession>
<accession>Q7TNA9</accession>
<accession>Q7TNB0</accession>
<accession>Q7TNB1</accession>
<accession>Q923S7</accession>
<sequence>MSDTEEQEYEEEQAEDEEAVEEEAPEEPEPVAEREEERPKPSRPVVPPLIPPKIPEGERVDFDDIHRKRMEKDLLELQTLIDVHFEQRKKEEEELIALKDRIERRRAERAEQQRFRTEKERERQAKLAEEKMRKEEEEAKKRAEDDAKKKKVLSNMGAHFGGYLVKAEQKRGKRQTGREMKLRILSERKKPLNIDYMGEDQLREKAQELSEWIHQLESEKFDLMEKLKQQKYEINVLYNRISHAQKFRKGAGKGRVGGRWK</sequence>
<protein>
    <recommendedName>
        <fullName>Troponin T, slow skeletal muscle</fullName>
        <shortName>TnTs</shortName>
    </recommendedName>
    <alternativeName>
        <fullName>Slow skeletal muscle troponin T</fullName>
        <shortName>sTnT</shortName>
    </alternativeName>
</protein>
<name>TNNT1_RAT</name>